<gene>
    <name evidence="1" type="primary">ndhK</name>
    <name type="ordered locus">LopeCp042</name>
</gene>
<dbReference type="EC" id="7.1.1.-" evidence="1"/>
<dbReference type="EMBL" id="AM777385">
    <property type="protein sequence ID" value="CAO85980.1"/>
    <property type="status" value="ALT_INIT"/>
    <property type="molecule type" value="Genomic_DNA"/>
</dbReference>
<dbReference type="RefSeq" id="YP_001531287.1">
    <property type="nucleotide sequence ID" value="NC_009950.1"/>
</dbReference>
<dbReference type="SMR" id="A8Y9H4"/>
<dbReference type="GeneID" id="5696621"/>
<dbReference type="KEGG" id="lper:5696621"/>
<dbReference type="GO" id="GO:0009535">
    <property type="term" value="C:chloroplast thylakoid membrane"/>
    <property type="evidence" value="ECO:0007669"/>
    <property type="project" value="UniProtKB-SubCell"/>
</dbReference>
<dbReference type="GO" id="GO:0045271">
    <property type="term" value="C:respiratory chain complex I"/>
    <property type="evidence" value="ECO:0007669"/>
    <property type="project" value="TreeGrafter"/>
</dbReference>
<dbReference type="GO" id="GO:0051539">
    <property type="term" value="F:4 iron, 4 sulfur cluster binding"/>
    <property type="evidence" value="ECO:0007669"/>
    <property type="project" value="UniProtKB-KW"/>
</dbReference>
<dbReference type="GO" id="GO:0005506">
    <property type="term" value="F:iron ion binding"/>
    <property type="evidence" value="ECO:0007669"/>
    <property type="project" value="UniProtKB-UniRule"/>
</dbReference>
<dbReference type="GO" id="GO:0008137">
    <property type="term" value="F:NADH dehydrogenase (ubiquinone) activity"/>
    <property type="evidence" value="ECO:0007669"/>
    <property type="project" value="InterPro"/>
</dbReference>
<dbReference type="GO" id="GO:0048038">
    <property type="term" value="F:quinone binding"/>
    <property type="evidence" value="ECO:0007669"/>
    <property type="project" value="UniProtKB-KW"/>
</dbReference>
<dbReference type="GO" id="GO:0009060">
    <property type="term" value="P:aerobic respiration"/>
    <property type="evidence" value="ECO:0007669"/>
    <property type="project" value="TreeGrafter"/>
</dbReference>
<dbReference type="GO" id="GO:0015990">
    <property type="term" value="P:electron transport coupled proton transport"/>
    <property type="evidence" value="ECO:0007669"/>
    <property type="project" value="TreeGrafter"/>
</dbReference>
<dbReference type="GO" id="GO:0019684">
    <property type="term" value="P:photosynthesis, light reaction"/>
    <property type="evidence" value="ECO:0007669"/>
    <property type="project" value="UniProtKB-UniRule"/>
</dbReference>
<dbReference type="FunFam" id="3.40.50.12280:FF:000003">
    <property type="entry name" value="NAD(P)H-quinone oxidoreductase subunit K, chloroplastic"/>
    <property type="match status" value="1"/>
</dbReference>
<dbReference type="Gene3D" id="3.40.50.12280">
    <property type="match status" value="1"/>
</dbReference>
<dbReference type="HAMAP" id="MF_01356">
    <property type="entry name" value="NDH1_NuoB"/>
    <property type="match status" value="1"/>
</dbReference>
<dbReference type="InterPro" id="IPR006137">
    <property type="entry name" value="NADH_UbQ_OxRdtase-like_20kDa"/>
</dbReference>
<dbReference type="InterPro" id="IPR006138">
    <property type="entry name" value="NADH_UQ_OxRdtase_20Kd_su"/>
</dbReference>
<dbReference type="NCBIfam" id="TIGR01957">
    <property type="entry name" value="nuoB_fam"/>
    <property type="match status" value="1"/>
</dbReference>
<dbReference type="NCBIfam" id="NF005012">
    <property type="entry name" value="PRK06411.1"/>
    <property type="match status" value="1"/>
</dbReference>
<dbReference type="PANTHER" id="PTHR11995">
    <property type="entry name" value="NADH DEHYDROGENASE"/>
    <property type="match status" value="1"/>
</dbReference>
<dbReference type="PANTHER" id="PTHR11995:SF14">
    <property type="entry name" value="NADH DEHYDROGENASE [UBIQUINONE] IRON-SULFUR PROTEIN 7, MITOCHONDRIAL"/>
    <property type="match status" value="1"/>
</dbReference>
<dbReference type="Pfam" id="PF01058">
    <property type="entry name" value="Oxidored_q6"/>
    <property type="match status" value="1"/>
</dbReference>
<dbReference type="SUPFAM" id="SSF56770">
    <property type="entry name" value="HydA/Nqo6-like"/>
    <property type="match status" value="1"/>
</dbReference>
<dbReference type="PROSITE" id="PS01150">
    <property type="entry name" value="COMPLEX1_20K"/>
    <property type="match status" value="1"/>
</dbReference>
<feature type="chain" id="PRO_0000358558" description="NAD(P)H-quinone oxidoreductase subunit K, chloroplastic">
    <location>
        <begin position="1"/>
        <end position="225"/>
    </location>
</feature>
<feature type="binding site" evidence="1">
    <location>
        <position position="43"/>
    </location>
    <ligand>
        <name>[4Fe-4S] cluster</name>
        <dbReference type="ChEBI" id="CHEBI:49883"/>
    </ligand>
</feature>
<feature type="binding site" evidence="1">
    <location>
        <position position="44"/>
    </location>
    <ligand>
        <name>[4Fe-4S] cluster</name>
        <dbReference type="ChEBI" id="CHEBI:49883"/>
    </ligand>
</feature>
<feature type="binding site" evidence="1">
    <location>
        <position position="108"/>
    </location>
    <ligand>
        <name>[4Fe-4S] cluster</name>
        <dbReference type="ChEBI" id="CHEBI:49883"/>
    </ligand>
</feature>
<feature type="binding site" evidence="1">
    <location>
        <position position="139"/>
    </location>
    <ligand>
        <name>[4Fe-4S] cluster</name>
        <dbReference type="ChEBI" id="CHEBI:49883"/>
    </ligand>
</feature>
<protein>
    <recommendedName>
        <fullName evidence="1">NAD(P)H-quinone oxidoreductase subunit K, chloroplastic</fullName>
        <ecNumber evidence="1">7.1.1.-</ecNumber>
    </recommendedName>
    <alternativeName>
        <fullName evidence="1">NAD(P)H dehydrogenase subunit K</fullName>
    </alternativeName>
    <alternativeName>
        <fullName evidence="1">NADH-plastoquinone oxidoreductase subunit K</fullName>
    </alternativeName>
</protein>
<accession>A8Y9H4</accession>
<keyword id="KW-0004">4Fe-4S</keyword>
<keyword id="KW-0150">Chloroplast</keyword>
<keyword id="KW-0408">Iron</keyword>
<keyword id="KW-0411">Iron-sulfur</keyword>
<keyword id="KW-0472">Membrane</keyword>
<keyword id="KW-0479">Metal-binding</keyword>
<keyword id="KW-0520">NAD</keyword>
<keyword id="KW-0521">NADP</keyword>
<keyword id="KW-0934">Plastid</keyword>
<keyword id="KW-0618">Plastoquinone</keyword>
<keyword id="KW-0874">Quinone</keyword>
<keyword id="KW-0793">Thylakoid</keyword>
<keyword id="KW-1278">Translocase</keyword>
<keyword id="KW-0813">Transport</keyword>
<geneLocation type="chloroplast"/>
<comment type="function">
    <text evidence="1">NDH shuttles electrons from NAD(P)H:plastoquinone, via FMN and iron-sulfur (Fe-S) centers, to quinones in the photosynthetic chain and possibly in a chloroplast respiratory chain. The immediate electron acceptor for the enzyme in this species is believed to be plastoquinone. Couples the redox reaction to proton translocation, and thus conserves the redox energy in a proton gradient.</text>
</comment>
<comment type="catalytic activity">
    <reaction evidence="1">
        <text>a plastoquinone + NADH + (n+1) H(+)(in) = a plastoquinol + NAD(+) + n H(+)(out)</text>
        <dbReference type="Rhea" id="RHEA:42608"/>
        <dbReference type="Rhea" id="RHEA-COMP:9561"/>
        <dbReference type="Rhea" id="RHEA-COMP:9562"/>
        <dbReference type="ChEBI" id="CHEBI:15378"/>
        <dbReference type="ChEBI" id="CHEBI:17757"/>
        <dbReference type="ChEBI" id="CHEBI:57540"/>
        <dbReference type="ChEBI" id="CHEBI:57945"/>
        <dbReference type="ChEBI" id="CHEBI:62192"/>
    </reaction>
</comment>
<comment type="catalytic activity">
    <reaction evidence="1">
        <text>a plastoquinone + NADPH + (n+1) H(+)(in) = a plastoquinol + NADP(+) + n H(+)(out)</text>
        <dbReference type="Rhea" id="RHEA:42612"/>
        <dbReference type="Rhea" id="RHEA-COMP:9561"/>
        <dbReference type="Rhea" id="RHEA-COMP:9562"/>
        <dbReference type="ChEBI" id="CHEBI:15378"/>
        <dbReference type="ChEBI" id="CHEBI:17757"/>
        <dbReference type="ChEBI" id="CHEBI:57783"/>
        <dbReference type="ChEBI" id="CHEBI:58349"/>
        <dbReference type="ChEBI" id="CHEBI:62192"/>
    </reaction>
</comment>
<comment type="cofactor">
    <cofactor evidence="1">
        <name>[4Fe-4S] cluster</name>
        <dbReference type="ChEBI" id="CHEBI:49883"/>
    </cofactor>
    <text evidence="1">Binds 1 [4Fe-4S] cluster.</text>
</comment>
<comment type="subunit">
    <text evidence="1">NDH is composed of at least 16 different subunits, 5 of which are encoded in the nucleus.</text>
</comment>
<comment type="subcellular location">
    <subcellularLocation>
        <location evidence="1">Plastid</location>
        <location evidence="1">Chloroplast thylakoid membrane</location>
        <topology evidence="1">Peripheral membrane protein</topology>
        <orientation evidence="1">Stromal side</orientation>
    </subcellularLocation>
</comment>
<comment type="similarity">
    <text evidence="1">Belongs to the complex I 20 kDa subunit family.</text>
</comment>
<comment type="sequence caution" evidence="2">
    <conflict type="erroneous initiation">
        <sequence resource="EMBL-CDS" id="CAO85980"/>
    </conflict>
</comment>
<name>NDHK_LOLPR</name>
<evidence type="ECO:0000255" key="1">
    <source>
        <dbReference type="HAMAP-Rule" id="MF_01356"/>
    </source>
</evidence>
<evidence type="ECO:0000305" key="2"/>
<organism>
    <name type="scientific">Lolium perenne</name>
    <name type="common">Perennial ryegrass</name>
    <dbReference type="NCBI Taxonomy" id="4522"/>
    <lineage>
        <taxon>Eukaryota</taxon>
        <taxon>Viridiplantae</taxon>
        <taxon>Streptophyta</taxon>
        <taxon>Embryophyta</taxon>
        <taxon>Tracheophyta</taxon>
        <taxon>Spermatophyta</taxon>
        <taxon>Magnoliopsida</taxon>
        <taxon>Liliopsida</taxon>
        <taxon>Poales</taxon>
        <taxon>Poaceae</taxon>
        <taxon>BOP clade</taxon>
        <taxon>Pooideae</taxon>
        <taxon>Poodae</taxon>
        <taxon>Poeae</taxon>
        <taxon>Poeae Chloroplast Group 2 (Poeae type)</taxon>
        <taxon>Loliodinae</taxon>
        <taxon>Loliinae</taxon>
        <taxon>Lolium</taxon>
    </lineage>
</organism>
<reference key="1">
    <citation type="journal article" date="2008" name="PLoS ONE">
        <title>An optimized chloroplast DNA extraction protocol for grasses (Poaceae) proves suitable for whole plastid genome sequencing and SNP detection.</title>
        <authorList>
            <person name="Diekmann K."/>
            <person name="Hodkinson T.R."/>
            <person name="Fricke E."/>
            <person name="Barth S."/>
        </authorList>
    </citation>
    <scope>NUCLEOTIDE SEQUENCE [LARGE SCALE GENOMIC DNA]</scope>
    <source>
        <strain>cv. Cashel</strain>
    </source>
</reference>
<sequence>MNLIEFPLLDQTSSNSVISTTPNDLSNWSRLSSLWPLLYGTSCCFIEFASLIGSRFDFDRYGLVPRSSPRQADLILTAGTVTMKMAPSLVRLYEQMPEPKYVIAMGACTITGGMFSTDSYSTVRGVDKLIPVDVYLPGCPPKPEAVIDALTKLRKKISREIVEDQTLSQNKNRFFTTSHKLYVRRSTHTGTYEQELLYQSPSTLDISSETFFKSKSPVPSYKLVN</sequence>
<proteinExistence type="inferred from homology"/>